<proteinExistence type="evidence at transcript level"/>
<comment type="function">
    <text evidence="2">G-protein coupled receptor for 5-hydroxytryptamine (serotonin), a biogenic hormone that functions as a neurotransmitter, a hormone and a mitogen. Ligand binding causes a conformation change that triggers signaling via guanine nucleotide-binding proteins (G proteins) and modulates the activity of downstream effectors. HTR4 is coupled to G(s) G alpha proteins and mediates activation of adenylate cyclase activity.</text>
</comment>
<comment type="subunit">
    <text evidence="2">Interacts (via C-terminus 330-346 AA) with GRK5; this interaction is promoted by 5-HT (serotonin).</text>
</comment>
<comment type="subcellular location">
    <subcellularLocation>
        <location evidence="2">Cell membrane</location>
        <topology evidence="3">Multi-pass membrane protein</topology>
    </subcellularLocation>
    <subcellularLocation>
        <location evidence="1">Endosome membrane</location>
        <topology evidence="3">Multi-pass membrane protein</topology>
    </subcellularLocation>
    <text evidence="1">Interaction with SNX27 mediates recruitment to early endosomes, while interaction with NHERF1 and EZR might target the protein to specialized subcellular regions, such as microvilli.</text>
</comment>
<comment type="alternative products">
    <event type="alternative splicing"/>
    <isoform>
        <id>O70528-1</id>
        <name>1</name>
        <sequence type="displayed"/>
    </isoform>
    <text>A number of isoforms are produced.</text>
</comment>
<comment type="domain">
    <text evidence="2">Specificity for G(s) G alpha proteins is determined by the length of transmembrane regions 5 and 6 (TM5 and TM6).</text>
</comment>
<comment type="similarity">
    <text evidence="4">Belongs to the G-protein coupled receptor 1 family.</text>
</comment>
<name>5HT4R_CAVPO</name>
<sequence length="388" mass="43726">MDKLDANVSSKEGFGSVEKVVLLTFLSAVILMAILGNLLVMVAVCRDRQLRKIKTNYFIVSLAFADLLVSVLVMPFGAIELVQDIWVYGEMFCLVRTSLDVLLTTASIFHLCCISLDRYYAICCQPLVYRNKMTPLRIALMLGGCWVIPMFISFLPIMQGWNNIGIVDLIEKRKFNQNSNSTYCVFMVNKPYAITCSVVAFYIPFLLMVLAYYRIYVTAKEHARQIQVLQRAGAPAEGRPQPADQHSTHRMRTETKAAKTLCIIMGCFCLCWAPFFVTNIVDPFIDYTVPGQLWTAFLWLGYINSGLNPFLYAFLNKSFRRAFLIILCCDDERYRRPSILGQTVPCSTTTINGSTHVLRDTVECGGQWESQCHPAASSPLVAAQPIDT</sequence>
<feature type="chain" id="PRO_0000068964" description="5-hydroxytryptamine receptor 4">
    <location>
        <begin position="1"/>
        <end position="388"/>
    </location>
</feature>
<feature type="topological domain" description="Extracellular" evidence="2">
    <location>
        <begin position="1"/>
        <end position="19"/>
    </location>
</feature>
<feature type="transmembrane region" description="Helical; Name=1" evidence="2">
    <location>
        <begin position="20"/>
        <end position="44"/>
    </location>
</feature>
<feature type="topological domain" description="Cytoplasmic" evidence="2">
    <location>
        <begin position="45"/>
        <end position="54"/>
    </location>
</feature>
<feature type="transmembrane region" description="Helical; Name=2" evidence="2">
    <location>
        <begin position="55"/>
        <end position="78"/>
    </location>
</feature>
<feature type="topological domain" description="Extracellular" evidence="2">
    <location>
        <begin position="79"/>
        <end position="92"/>
    </location>
</feature>
<feature type="transmembrane region" description="Helical; Name=3" evidence="2">
    <location>
        <begin position="93"/>
        <end position="117"/>
    </location>
</feature>
<feature type="topological domain" description="Cytoplasmic" evidence="2">
    <location>
        <begin position="118"/>
        <end position="133"/>
    </location>
</feature>
<feature type="transmembrane region" description="Helical; Name=4" evidence="2">
    <location>
        <begin position="134"/>
        <end position="157"/>
    </location>
</feature>
<feature type="topological domain" description="Extracellular" evidence="2">
    <location>
        <begin position="158"/>
        <end position="188"/>
    </location>
</feature>
<feature type="transmembrane region" description="Helical; Name=5" evidence="2">
    <location>
        <begin position="189"/>
        <end position="212"/>
    </location>
</feature>
<feature type="topological domain" description="Cytoplasmic" evidence="2">
    <location>
        <begin position="213"/>
        <end position="257"/>
    </location>
</feature>
<feature type="transmembrane region" description="Helical; Name=6" evidence="2">
    <location>
        <begin position="258"/>
        <end position="283"/>
    </location>
</feature>
<feature type="topological domain" description="Extracellular" evidence="2">
    <location>
        <begin position="284"/>
        <end position="290"/>
    </location>
</feature>
<feature type="transmembrane region" description="Helical; Name=7" evidence="2">
    <location>
        <begin position="291"/>
        <end position="314"/>
    </location>
</feature>
<feature type="topological domain" description="Cytoplasmic" evidence="2">
    <location>
        <begin position="315"/>
        <end position="388"/>
    </location>
</feature>
<feature type="binding site" evidence="2">
    <location>
        <position position="100"/>
    </location>
    <ligand>
        <name>serotonin</name>
        <dbReference type="ChEBI" id="CHEBI:350546"/>
    </ligand>
</feature>
<feature type="binding site" evidence="2">
    <location>
        <position position="279"/>
    </location>
    <ligand>
        <name>serotonin</name>
        <dbReference type="ChEBI" id="CHEBI:350546"/>
    </ligand>
</feature>
<feature type="glycosylation site" description="N-linked (GlcNAc...) asparagine" evidence="3">
    <location>
        <position position="7"/>
    </location>
</feature>
<feature type="disulfide bond" evidence="4">
    <location>
        <begin position="93"/>
        <end position="184"/>
    </location>
</feature>
<protein>
    <recommendedName>
        <fullName>5-hydroxytryptamine receptor 4</fullName>
        <shortName>5-HT-4</shortName>
        <shortName>5-HT4</shortName>
    </recommendedName>
    <alternativeName>
        <fullName>Serotonin receptor 4</fullName>
    </alternativeName>
</protein>
<reference key="1">
    <citation type="submission" date="1997-06" db="EMBL/GenBank/DDBJ databases">
        <title>Cloning and expression of 5-HT4 receptor species and splice variants.</title>
        <authorList>
            <person name="Van den Wyngaert I."/>
            <person name="Gommeren W."/>
            <person name="Jurzak M."/>
            <person name="Verhasselt P."/>
            <person name="Gordon R."/>
            <person name="Leysen J."/>
            <person name="Luyten W."/>
            <person name="Bender E."/>
        </authorList>
    </citation>
    <scope>NUCLEOTIDE SEQUENCE [MRNA]</scope>
</reference>
<dbReference type="EMBL" id="Y13585">
    <property type="protein sequence ID" value="CAA73912.1"/>
    <property type="molecule type" value="mRNA"/>
</dbReference>
<dbReference type="RefSeq" id="NP_001166434.1">
    <molecule id="O70528-1"/>
    <property type="nucleotide sequence ID" value="NM_001172963.1"/>
</dbReference>
<dbReference type="SMR" id="O70528"/>
<dbReference type="FunCoup" id="O70528">
    <property type="interactions" value="1091"/>
</dbReference>
<dbReference type="STRING" id="10141.ENSCPOP00000011183"/>
<dbReference type="BindingDB" id="O70528"/>
<dbReference type="ChEMBL" id="CHEMBL5017"/>
<dbReference type="DrugCentral" id="O70528"/>
<dbReference type="GlyCosmos" id="O70528">
    <property type="glycosylation" value="1 site, No reported glycans"/>
</dbReference>
<dbReference type="Ensembl" id="ENSCPOT00000012547.3">
    <molecule id="O70528-1"/>
    <property type="protein sequence ID" value="ENSCPOP00000011183.2"/>
    <property type="gene ID" value="ENSCPOG00000012428.4"/>
</dbReference>
<dbReference type="GeneID" id="100135548"/>
<dbReference type="KEGG" id="cpoc:100135548"/>
<dbReference type="CTD" id="3360"/>
<dbReference type="VEuPathDB" id="HostDB:ENSCPOG00000012428"/>
<dbReference type="eggNOG" id="KOG3656">
    <property type="taxonomic scope" value="Eukaryota"/>
</dbReference>
<dbReference type="GeneTree" id="ENSGT00940000155983"/>
<dbReference type="HOGENOM" id="CLU_009579_11_0_1"/>
<dbReference type="InParanoid" id="O70528"/>
<dbReference type="OMA" id="CRDRQLX"/>
<dbReference type="OrthoDB" id="5859976at2759"/>
<dbReference type="TreeFam" id="TF316350"/>
<dbReference type="Proteomes" id="UP000005447">
    <property type="component" value="Unassembled WGS sequence"/>
</dbReference>
<dbReference type="Bgee" id="ENSCPOG00000012428">
    <property type="expression patterns" value="Expressed in frontal cortex"/>
</dbReference>
<dbReference type="GO" id="GO:0010008">
    <property type="term" value="C:endosome membrane"/>
    <property type="evidence" value="ECO:0007669"/>
    <property type="project" value="UniProtKB-SubCell"/>
</dbReference>
<dbReference type="GO" id="GO:0098978">
    <property type="term" value="C:glutamatergic synapse"/>
    <property type="evidence" value="ECO:0007669"/>
    <property type="project" value="Ensembl"/>
</dbReference>
<dbReference type="GO" id="GO:0005886">
    <property type="term" value="C:plasma membrane"/>
    <property type="evidence" value="ECO:0000250"/>
    <property type="project" value="UniProtKB"/>
</dbReference>
<dbReference type="GO" id="GO:0098794">
    <property type="term" value="C:postsynapse"/>
    <property type="evidence" value="ECO:0007669"/>
    <property type="project" value="Ensembl"/>
</dbReference>
<dbReference type="GO" id="GO:0004993">
    <property type="term" value="F:G protein-coupled serotonin receptor activity"/>
    <property type="evidence" value="ECO:0000250"/>
    <property type="project" value="UniProtKB"/>
</dbReference>
<dbReference type="GO" id="GO:0099589">
    <property type="term" value="F:serotonin receptor activity"/>
    <property type="evidence" value="ECO:0007669"/>
    <property type="project" value="Ensembl"/>
</dbReference>
<dbReference type="GO" id="GO:0071880">
    <property type="term" value="P:adenylate cyclase-activating adrenergic receptor signaling pathway"/>
    <property type="evidence" value="ECO:0007669"/>
    <property type="project" value="TreeGrafter"/>
</dbReference>
<dbReference type="GO" id="GO:0007192">
    <property type="term" value="P:adenylate cyclase-activating serotonin receptor signaling pathway"/>
    <property type="evidence" value="ECO:0000250"/>
    <property type="project" value="UniProtKB"/>
</dbReference>
<dbReference type="GO" id="GO:0007268">
    <property type="term" value="P:chemical synaptic transmission"/>
    <property type="evidence" value="ECO:0007669"/>
    <property type="project" value="InterPro"/>
</dbReference>
<dbReference type="GO" id="GO:0120056">
    <property type="term" value="P:large intestinal transit"/>
    <property type="evidence" value="ECO:0007669"/>
    <property type="project" value="Ensembl"/>
</dbReference>
<dbReference type="GO" id="GO:0030277">
    <property type="term" value="P:maintenance of gastrointestinal epithelium"/>
    <property type="evidence" value="ECO:0007669"/>
    <property type="project" value="Ensembl"/>
</dbReference>
<dbReference type="GO" id="GO:0070254">
    <property type="term" value="P:mucus secretion"/>
    <property type="evidence" value="ECO:0007669"/>
    <property type="project" value="Ensembl"/>
</dbReference>
<dbReference type="GO" id="GO:0043410">
    <property type="term" value="P:positive regulation of MAPK cascade"/>
    <property type="evidence" value="ECO:0007669"/>
    <property type="project" value="TreeGrafter"/>
</dbReference>
<dbReference type="GO" id="GO:0032098">
    <property type="term" value="P:regulation of appetite"/>
    <property type="evidence" value="ECO:0007669"/>
    <property type="project" value="InterPro"/>
</dbReference>
<dbReference type="GO" id="GO:0150052">
    <property type="term" value="P:regulation of postsynapse assembly"/>
    <property type="evidence" value="ECO:0007669"/>
    <property type="project" value="Ensembl"/>
</dbReference>
<dbReference type="CDD" id="cd15056">
    <property type="entry name" value="7tmA_5-HT4"/>
    <property type="match status" value="1"/>
</dbReference>
<dbReference type="FunFam" id="1.20.1070.10:FF:000046">
    <property type="entry name" value="5-hydroxytryptamine receptor 4"/>
    <property type="match status" value="1"/>
</dbReference>
<dbReference type="Gene3D" id="1.20.1070.10">
    <property type="entry name" value="Rhodopsin 7-helix transmembrane proteins"/>
    <property type="match status" value="1"/>
</dbReference>
<dbReference type="InterPro" id="IPR001520">
    <property type="entry name" value="5HT4_rcpt"/>
</dbReference>
<dbReference type="InterPro" id="IPR000276">
    <property type="entry name" value="GPCR_Rhodpsn"/>
</dbReference>
<dbReference type="InterPro" id="IPR017452">
    <property type="entry name" value="GPCR_Rhodpsn_7TM"/>
</dbReference>
<dbReference type="PANTHER" id="PTHR24248">
    <property type="entry name" value="ADRENERGIC RECEPTOR-RELATED G-PROTEIN COUPLED RECEPTOR"/>
    <property type="match status" value="1"/>
</dbReference>
<dbReference type="PANTHER" id="PTHR24248:SF66">
    <property type="entry name" value="OCTOPAMINE RECEPTOR BETA-3R"/>
    <property type="match status" value="1"/>
</dbReference>
<dbReference type="Pfam" id="PF00001">
    <property type="entry name" value="7tm_1"/>
    <property type="match status" value="1"/>
</dbReference>
<dbReference type="PRINTS" id="PR01059">
    <property type="entry name" value="5HT4RECEPTR"/>
</dbReference>
<dbReference type="PRINTS" id="PR00237">
    <property type="entry name" value="GPCRRHODOPSN"/>
</dbReference>
<dbReference type="SMART" id="SM01381">
    <property type="entry name" value="7TM_GPCR_Srsx"/>
    <property type="match status" value="1"/>
</dbReference>
<dbReference type="SUPFAM" id="SSF81321">
    <property type="entry name" value="Family A G protein-coupled receptor-like"/>
    <property type="match status" value="1"/>
</dbReference>
<dbReference type="PROSITE" id="PS00237">
    <property type="entry name" value="G_PROTEIN_RECEP_F1_1"/>
    <property type="match status" value="1"/>
</dbReference>
<dbReference type="PROSITE" id="PS50262">
    <property type="entry name" value="G_PROTEIN_RECEP_F1_2"/>
    <property type="match status" value="1"/>
</dbReference>
<accession>O70528</accession>
<gene>
    <name type="primary">HTR4</name>
</gene>
<evidence type="ECO:0000250" key="1">
    <source>
        <dbReference type="UniProtKB" id="P97288"/>
    </source>
</evidence>
<evidence type="ECO:0000250" key="2">
    <source>
        <dbReference type="UniProtKB" id="Q13639"/>
    </source>
</evidence>
<evidence type="ECO:0000255" key="3"/>
<evidence type="ECO:0000255" key="4">
    <source>
        <dbReference type="PROSITE-ProRule" id="PRU00521"/>
    </source>
</evidence>
<organism>
    <name type="scientific">Cavia porcellus</name>
    <name type="common">Guinea pig</name>
    <dbReference type="NCBI Taxonomy" id="10141"/>
    <lineage>
        <taxon>Eukaryota</taxon>
        <taxon>Metazoa</taxon>
        <taxon>Chordata</taxon>
        <taxon>Craniata</taxon>
        <taxon>Vertebrata</taxon>
        <taxon>Euteleostomi</taxon>
        <taxon>Mammalia</taxon>
        <taxon>Eutheria</taxon>
        <taxon>Euarchontoglires</taxon>
        <taxon>Glires</taxon>
        <taxon>Rodentia</taxon>
        <taxon>Hystricomorpha</taxon>
        <taxon>Caviidae</taxon>
        <taxon>Cavia</taxon>
    </lineage>
</organism>
<keyword id="KW-0025">Alternative splicing</keyword>
<keyword id="KW-1003">Cell membrane</keyword>
<keyword id="KW-1015">Disulfide bond</keyword>
<keyword id="KW-0967">Endosome</keyword>
<keyword id="KW-0297">G-protein coupled receptor</keyword>
<keyword id="KW-0325">Glycoprotein</keyword>
<keyword id="KW-0472">Membrane</keyword>
<keyword id="KW-0675">Receptor</keyword>
<keyword id="KW-1185">Reference proteome</keyword>
<keyword id="KW-0807">Transducer</keyword>
<keyword id="KW-0812">Transmembrane</keyword>
<keyword id="KW-1133">Transmembrane helix</keyword>